<protein>
    <recommendedName>
        <fullName>Telomere-binding protein subunit beta</fullName>
    </recommendedName>
</protein>
<sequence>MSKGQAQQQSAFKQLFTEFFNLGGDFSKVSKDLKKPLKTYVKESYPHFLVTDGYFFVQPHFTKEAVAEFHQKFPNVNIVDLHDKVIVINSWSLELRRVNSAEVFTSYANLEARLVVHSFKPNLQERLNPTRYPVNLFRDDEFKTIIQHFRHQALQQSIAKNTKQESLPDISKLSGADAAGKKTKVDGGIVKTGASKGDEFADFSFKEGSTAVLKIQDIFVQEKGKDALKRIQDQQVESVQVQPKVRGGAKGKKKAATKSATKKTVAAKKTAESADVRKSVDKIVKYTPNKPSSRKETPQKSQSAPAAGKSSAKRTTTGSKTKIPANPSPSGKKSTKTTDQMTMAQFKKYLDWHEKKKGGKTSSGGKVLGKRSAGKASATSGKASKASKRSKK</sequence>
<proteinExistence type="predicted"/>
<dbReference type="EMBL" id="X61748">
    <property type="protein sequence ID" value="CAA43887.1"/>
    <property type="molecule type" value="Genomic_DNA"/>
</dbReference>
<dbReference type="SMR" id="P29548"/>
<dbReference type="GO" id="GO:0000781">
    <property type="term" value="C:chromosome, telomeric region"/>
    <property type="evidence" value="ECO:0007669"/>
    <property type="project" value="UniProtKB-SubCell"/>
</dbReference>
<dbReference type="GO" id="GO:0005634">
    <property type="term" value="C:nucleus"/>
    <property type="evidence" value="ECO:0007669"/>
    <property type="project" value="UniProtKB-SubCell"/>
</dbReference>
<dbReference type="GO" id="GO:0042162">
    <property type="term" value="F:telomeric DNA binding"/>
    <property type="evidence" value="ECO:0007669"/>
    <property type="project" value="InterPro"/>
</dbReference>
<dbReference type="Gene3D" id="2.40.200.10">
    <property type="entry name" value="Telomere-binding Protein Beta Subunit, Chain"/>
    <property type="match status" value="1"/>
</dbReference>
<dbReference type="InterPro" id="IPR012340">
    <property type="entry name" value="NA-bd_OB-fold"/>
</dbReference>
<dbReference type="InterPro" id="IPR010874">
    <property type="entry name" value="TEBB"/>
</dbReference>
<dbReference type="InterPro" id="IPR023113">
    <property type="entry name" value="TEBP_beta_dom_sf"/>
</dbReference>
<dbReference type="Pfam" id="PF07404">
    <property type="entry name" value="TEBP_beta"/>
    <property type="match status" value="1"/>
</dbReference>
<dbReference type="PIRSF" id="PIRSF018412">
    <property type="entry name" value="TEBP_beta"/>
    <property type="match status" value="1"/>
</dbReference>
<dbReference type="SUPFAM" id="SSF50249">
    <property type="entry name" value="Nucleic acid-binding proteins"/>
    <property type="match status" value="1"/>
</dbReference>
<feature type="chain" id="PRO_0000121738" description="Telomere-binding protein subunit beta">
    <location>
        <begin position="1"/>
        <end position="392"/>
    </location>
</feature>
<feature type="region of interest" description="Disordered" evidence="1">
    <location>
        <begin position="234"/>
        <end position="392"/>
    </location>
</feature>
<feature type="compositionally biased region" description="Basic residues" evidence="1">
    <location>
        <begin position="247"/>
        <end position="256"/>
    </location>
</feature>
<feature type="compositionally biased region" description="Low complexity" evidence="1">
    <location>
        <begin position="257"/>
        <end position="268"/>
    </location>
</feature>
<feature type="compositionally biased region" description="Basic and acidic residues" evidence="1">
    <location>
        <begin position="269"/>
        <end position="284"/>
    </location>
</feature>
<feature type="compositionally biased region" description="Polar residues" evidence="1">
    <location>
        <begin position="328"/>
        <end position="343"/>
    </location>
</feature>
<feature type="compositionally biased region" description="Low complexity" evidence="1">
    <location>
        <begin position="374"/>
        <end position="384"/>
    </location>
</feature>
<evidence type="ECO:0000256" key="1">
    <source>
        <dbReference type="SAM" id="MobiDB-lite"/>
    </source>
</evidence>
<reference key="1">
    <citation type="journal article" date="1991" name="Nucleic Acids Res.">
        <title>Molecular cloning of telomere-binding protein genes from Stylonychia mytilis.</title>
        <authorList>
            <person name="Fang G."/>
            <person name="Cech T.R."/>
        </authorList>
    </citation>
    <scope>NUCLEOTIDE SEQUENCE [GENOMIC DNA]</scope>
</reference>
<name>TEBB_STYMT</name>
<accession>P29548</accession>
<organism>
    <name type="scientific">Stylonychia mytilus</name>
    <name type="common">Ciliate</name>
    <dbReference type="NCBI Taxonomy" id="5950"/>
    <lineage>
        <taxon>Eukaryota</taxon>
        <taxon>Sar</taxon>
        <taxon>Alveolata</taxon>
        <taxon>Ciliophora</taxon>
        <taxon>Intramacronucleata</taxon>
        <taxon>Spirotrichea</taxon>
        <taxon>Stichotrichia</taxon>
        <taxon>Sporadotrichida</taxon>
        <taxon>Oxytrichidae</taxon>
        <taxon>Stylonychinae</taxon>
        <taxon>Stylonychia</taxon>
    </lineage>
</organism>
<keyword id="KW-0158">Chromosome</keyword>
<keyword id="KW-0238">DNA-binding</keyword>
<keyword id="KW-0539">Nucleus</keyword>
<keyword id="KW-0779">Telomere</keyword>
<comment type="function">
    <text>May function as protective capping of the single-stranded telomeric overhang. May also participate in telomere length regulation during DNA replication.</text>
</comment>
<comment type="subunit">
    <text>Heterodimer of an alpha and a beta subunit.</text>
</comment>
<comment type="subcellular location">
    <subcellularLocation>
        <location>Nucleus</location>
    </subcellularLocation>
    <subcellularLocation>
        <location>Chromosome</location>
        <location>Telomere</location>
    </subcellularLocation>
</comment>
<gene>
    <name type="primary">STY43</name>
</gene>